<organism>
    <name type="scientific">Mycobacterium leprae (strain TN)</name>
    <dbReference type="NCBI Taxonomy" id="272631"/>
    <lineage>
        <taxon>Bacteria</taxon>
        <taxon>Bacillati</taxon>
        <taxon>Actinomycetota</taxon>
        <taxon>Actinomycetes</taxon>
        <taxon>Mycobacteriales</taxon>
        <taxon>Mycobacteriaceae</taxon>
        <taxon>Mycobacterium</taxon>
    </lineage>
</organism>
<name>RS1_MYCLE</name>
<proteinExistence type="evidence at protein level"/>
<comment type="function">
    <text evidence="1">Binds mRNA; thus facilitating recognition of the initiation point. It is needed to translate mRNA with a short Shine-Dalgarno (SD) purine-rich sequence (By similarity).</text>
</comment>
<comment type="similarity">
    <text evidence="4">Belongs to the bacterial ribosomal protein bS1 family.</text>
</comment>
<evidence type="ECO:0000250" key="1"/>
<evidence type="ECO:0000255" key="2">
    <source>
        <dbReference type="PROSITE-ProRule" id="PRU00180"/>
    </source>
</evidence>
<evidence type="ECO:0000256" key="3">
    <source>
        <dbReference type="SAM" id="MobiDB-lite"/>
    </source>
</evidence>
<evidence type="ECO:0000305" key="4"/>
<evidence type="ECO:0007829" key="5">
    <source>
        <dbReference type="PDB" id="5IE8"/>
    </source>
</evidence>
<keyword id="KW-0002">3D-structure</keyword>
<keyword id="KW-1185">Reference proteome</keyword>
<keyword id="KW-0677">Repeat</keyword>
<keyword id="KW-0687">Ribonucleoprotein</keyword>
<keyword id="KW-0689">Ribosomal protein</keyword>
<keyword id="KW-0694">RNA-binding</keyword>
<protein>
    <recommendedName>
        <fullName evidence="4">Small ribosomal subunit protein bS1</fullName>
    </recommendedName>
    <alternativeName>
        <fullName>30S ribosomal protein S1</fullName>
    </alternativeName>
</protein>
<sequence>MSIPAVPSPQIAVNDVGSSEDFLAAIDKTIKYFNDGDIVEGTIVKVDRDEVLLDIGYKTEGVIPARELSIKHDVDPNEVVSVGDEVEALVLTKEDKEGRLILSKKRAQYERAWGTIEALKEKDEAVKGIVIEVVKGGLILDIGLRGFLPASLVEMRRVRDLQPYIGKEIEAKIIELDKNRNNVVLSRRAWLEQTQSEVRSEFLNQLQKGAIRKGVVSSIVNFGAFVDLGGVDGLVHVSELSWKHIDHPSEVVQVGNEVTVEVLDVDMDRERVSLSLKATQEDPWRHFARTHAIGQIVPGKVTKLVPFGAFVRVEEGIEGLVHISELAERHVEVPDQVVAVGDDAMVKVIDIDLERRRISLSLKQANEDYIEEFDPAKYGMADSYDEQGNYIFPEGFDPDSNEWLEGFDTQRAEWEARYAEAERRYKMHTIQMEKFAATEEAGHGSSEQPPASSTPSAKATGGSLASDAQLAALREKLAGSA</sequence>
<feature type="chain" id="PRO_0000196041" description="Small ribosomal subunit protein bS1">
    <location>
        <begin position="1"/>
        <end position="481"/>
    </location>
</feature>
<feature type="domain" description="S1 motif 1" evidence="2">
    <location>
        <begin position="36"/>
        <end position="105"/>
    </location>
</feature>
<feature type="domain" description="S1 motif 2" evidence="2">
    <location>
        <begin position="123"/>
        <end position="188"/>
    </location>
</feature>
<feature type="domain" description="S1 motif 3" evidence="2">
    <location>
        <begin position="209"/>
        <end position="277"/>
    </location>
</feature>
<feature type="domain" description="S1 motif 4" evidence="2">
    <location>
        <begin position="294"/>
        <end position="363"/>
    </location>
</feature>
<feature type="region of interest" description="Disordered" evidence="3">
    <location>
        <begin position="437"/>
        <end position="465"/>
    </location>
</feature>
<feature type="compositionally biased region" description="Polar residues" evidence="3">
    <location>
        <begin position="445"/>
        <end position="457"/>
    </location>
</feature>
<feature type="sequence conflict" description="In Ref. 1; CAA86365." evidence="4" ref="1">
    <original>AFVDL</original>
    <variation>CVCRS</variation>
    <location>
        <begin position="224"/>
        <end position="228"/>
    </location>
</feature>
<feature type="sequence conflict" description="In Ref. 1; CAA86365." evidence="4" ref="1">
    <original>QANEDYIEEFDPAKYGMADSYDEQGNYIFP</original>
    <variation>ADQRGLHRGVRPGKVRYGPTATTSRATTSSL</variation>
    <location>
        <begin position="364"/>
        <end position="393"/>
    </location>
</feature>
<feature type="helix" evidence="5">
    <location>
        <begin position="283"/>
        <end position="290"/>
    </location>
</feature>
<feature type="strand" evidence="5">
    <location>
        <begin position="296"/>
        <end position="305"/>
    </location>
</feature>
<feature type="strand" evidence="5">
    <location>
        <begin position="308"/>
        <end position="314"/>
    </location>
</feature>
<feature type="strand" evidence="5">
    <location>
        <begin position="317"/>
        <end position="322"/>
    </location>
</feature>
<feature type="helix" evidence="5">
    <location>
        <begin position="323"/>
        <end position="326"/>
    </location>
</feature>
<feature type="helix" evidence="5">
    <location>
        <begin position="334"/>
        <end position="336"/>
    </location>
</feature>
<feature type="strand" evidence="5">
    <location>
        <begin position="342"/>
        <end position="352"/>
    </location>
</feature>
<feature type="turn" evidence="5">
    <location>
        <begin position="353"/>
        <end position="356"/>
    </location>
</feature>
<feature type="strand" evidence="5">
    <location>
        <begin position="357"/>
        <end position="361"/>
    </location>
</feature>
<feature type="helix" evidence="5">
    <location>
        <begin position="362"/>
        <end position="367"/>
    </location>
</feature>
<reference key="1">
    <citation type="journal article" date="1995" name="Mol. Microbiol.">
        <title>The Mycobacterium leprae genome: systematic sequence analysis identifies key catabolic enzymes, ATP-dependent transport systems and a novel polA locus associated with genomic variability.</title>
        <authorList>
            <person name="Fsihi H."/>
            <person name="Cole S.T."/>
        </authorList>
    </citation>
    <scope>NUCLEOTIDE SEQUENCE [GENOMIC DNA]</scope>
</reference>
<reference key="2">
    <citation type="journal article" date="2001" name="Nature">
        <title>Massive gene decay in the leprosy bacillus.</title>
        <authorList>
            <person name="Cole S.T."/>
            <person name="Eiglmeier K."/>
            <person name="Parkhill J."/>
            <person name="James K.D."/>
            <person name="Thomson N.R."/>
            <person name="Wheeler P.R."/>
            <person name="Honore N."/>
            <person name="Garnier T."/>
            <person name="Churcher C.M."/>
            <person name="Harris D.E."/>
            <person name="Mungall K.L."/>
            <person name="Basham D."/>
            <person name="Brown D."/>
            <person name="Chillingworth T."/>
            <person name="Connor R."/>
            <person name="Davies R.M."/>
            <person name="Devlin K."/>
            <person name="Duthoy S."/>
            <person name="Feltwell T."/>
            <person name="Fraser A."/>
            <person name="Hamlin N."/>
            <person name="Holroyd S."/>
            <person name="Hornsby T."/>
            <person name="Jagels K."/>
            <person name="Lacroix C."/>
            <person name="Maclean J."/>
            <person name="Moule S."/>
            <person name="Murphy L.D."/>
            <person name="Oliver K."/>
            <person name="Quail M.A."/>
            <person name="Rajandream M.A."/>
            <person name="Rutherford K.M."/>
            <person name="Rutter S."/>
            <person name="Seeger K."/>
            <person name="Simon S."/>
            <person name="Simmonds M."/>
            <person name="Skelton J."/>
            <person name="Squares R."/>
            <person name="Squares S."/>
            <person name="Stevens K."/>
            <person name="Taylor K."/>
            <person name="Whitehead S."/>
            <person name="Woodward J.R."/>
            <person name="Barrell B.G."/>
        </authorList>
    </citation>
    <scope>NUCLEOTIDE SEQUENCE [LARGE SCALE GENOMIC DNA]</scope>
    <source>
        <strain>TN</strain>
    </source>
</reference>
<dbReference type="EMBL" id="Z46257">
    <property type="protein sequence ID" value="CAA86365.1"/>
    <property type="molecule type" value="Genomic_DNA"/>
</dbReference>
<dbReference type="EMBL" id="AL583921">
    <property type="protein sequence ID" value="CAC31763.1"/>
    <property type="molecule type" value="Genomic_DNA"/>
</dbReference>
<dbReference type="PIR" id="H87081">
    <property type="entry name" value="H87081"/>
</dbReference>
<dbReference type="PIR" id="S77660">
    <property type="entry name" value="S77660"/>
</dbReference>
<dbReference type="RefSeq" id="NP_301983.1">
    <property type="nucleotide sequence ID" value="NC_002677.1"/>
</dbReference>
<dbReference type="RefSeq" id="WP_010908304.1">
    <property type="nucleotide sequence ID" value="NC_002677.1"/>
</dbReference>
<dbReference type="PDB" id="5IE8">
    <property type="method" value="NMR"/>
    <property type="chains" value="A=280-368"/>
</dbReference>
<dbReference type="PDBsum" id="5IE8"/>
<dbReference type="BMRB" id="P46836"/>
<dbReference type="SMR" id="P46836"/>
<dbReference type="STRING" id="272631.gene:17575221"/>
<dbReference type="KEGG" id="mle:ML1382"/>
<dbReference type="PATRIC" id="fig|272631.5.peg.2565"/>
<dbReference type="Leproma" id="ML1382"/>
<dbReference type="eggNOG" id="COG0539">
    <property type="taxonomic scope" value="Bacteria"/>
</dbReference>
<dbReference type="HOGENOM" id="CLU_015805_4_1_11"/>
<dbReference type="OrthoDB" id="9804077at2"/>
<dbReference type="Proteomes" id="UP000000806">
    <property type="component" value="Chromosome"/>
</dbReference>
<dbReference type="GO" id="GO:1990904">
    <property type="term" value="C:ribonucleoprotein complex"/>
    <property type="evidence" value="ECO:0007669"/>
    <property type="project" value="UniProtKB-KW"/>
</dbReference>
<dbReference type="GO" id="GO:0005840">
    <property type="term" value="C:ribosome"/>
    <property type="evidence" value="ECO:0007669"/>
    <property type="project" value="UniProtKB-KW"/>
</dbReference>
<dbReference type="GO" id="GO:0003729">
    <property type="term" value="F:mRNA binding"/>
    <property type="evidence" value="ECO:0007669"/>
    <property type="project" value="TreeGrafter"/>
</dbReference>
<dbReference type="GO" id="GO:0003735">
    <property type="term" value="F:structural constituent of ribosome"/>
    <property type="evidence" value="ECO:0007669"/>
    <property type="project" value="TreeGrafter"/>
</dbReference>
<dbReference type="GO" id="GO:0006412">
    <property type="term" value="P:translation"/>
    <property type="evidence" value="ECO:0007669"/>
    <property type="project" value="TreeGrafter"/>
</dbReference>
<dbReference type="CDD" id="cd05687">
    <property type="entry name" value="S1_RPS1_repeat_ec1_hs1"/>
    <property type="match status" value="1"/>
</dbReference>
<dbReference type="CDD" id="cd04465">
    <property type="entry name" value="S1_RPS1_repeat_ec2_hs2"/>
    <property type="match status" value="1"/>
</dbReference>
<dbReference type="CDD" id="cd05688">
    <property type="entry name" value="S1_RPS1_repeat_ec3"/>
    <property type="match status" value="1"/>
</dbReference>
<dbReference type="FunFam" id="2.40.50.140:FF:000031">
    <property type="entry name" value="30S ribosomal protein S1"/>
    <property type="match status" value="1"/>
</dbReference>
<dbReference type="FunFam" id="2.40.50.140:FF:000035">
    <property type="entry name" value="30S ribosomal protein S1"/>
    <property type="match status" value="1"/>
</dbReference>
<dbReference type="FunFam" id="2.40.50.140:FF:000039">
    <property type="entry name" value="30S ribosomal protein S1"/>
    <property type="match status" value="1"/>
</dbReference>
<dbReference type="Gene3D" id="2.40.50.140">
    <property type="entry name" value="Nucleic acid-binding proteins"/>
    <property type="match status" value="4"/>
</dbReference>
<dbReference type="InterPro" id="IPR012340">
    <property type="entry name" value="NA-bd_OB-fold"/>
</dbReference>
<dbReference type="InterPro" id="IPR050437">
    <property type="entry name" value="Ribos_protein_bS1-like"/>
</dbReference>
<dbReference type="InterPro" id="IPR035104">
    <property type="entry name" value="Ribosomal_protein_S1-like"/>
</dbReference>
<dbReference type="InterPro" id="IPR003029">
    <property type="entry name" value="S1_domain"/>
</dbReference>
<dbReference type="NCBIfam" id="NF005208">
    <property type="entry name" value="PRK06676.1"/>
    <property type="match status" value="1"/>
</dbReference>
<dbReference type="NCBIfam" id="NF005911">
    <property type="entry name" value="PRK07899.1"/>
    <property type="match status" value="1"/>
</dbReference>
<dbReference type="PANTHER" id="PTHR10724">
    <property type="entry name" value="30S RIBOSOMAL PROTEIN S1"/>
    <property type="match status" value="1"/>
</dbReference>
<dbReference type="PANTHER" id="PTHR10724:SF7">
    <property type="entry name" value="SMALL RIBOSOMAL SUBUNIT PROTEIN BS1C"/>
    <property type="match status" value="1"/>
</dbReference>
<dbReference type="Pfam" id="PF00575">
    <property type="entry name" value="S1"/>
    <property type="match status" value="4"/>
</dbReference>
<dbReference type="PRINTS" id="PR00681">
    <property type="entry name" value="RIBOSOMALS1"/>
</dbReference>
<dbReference type="SMART" id="SM00316">
    <property type="entry name" value="S1"/>
    <property type="match status" value="4"/>
</dbReference>
<dbReference type="SUPFAM" id="SSF50249">
    <property type="entry name" value="Nucleic acid-binding proteins"/>
    <property type="match status" value="4"/>
</dbReference>
<dbReference type="PROSITE" id="PS50126">
    <property type="entry name" value="S1"/>
    <property type="match status" value="4"/>
</dbReference>
<gene>
    <name type="primary">rpsA</name>
    <name type="ordered locus">ML1382</name>
</gene>
<accession>P46836</accession>